<gene>
    <name type="primary">pscG</name>
    <name type="ordered locus">PA1720</name>
</gene>
<sequence>MDTSLIRELAELALAGSGQHCHEEALCIAEWLERLGQDEAARLIRISSLANQGRYQEALAFAHGNPWPALEPWFALCEWHLGLGAALDRRLAGLGGSSDPALADFAAGMRAQVRT</sequence>
<accession>P95435</accession>
<accession>Q7DCE7</accession>
<evidence type="ECO:0000269" key="1">
    <source>
    </source>
</evidence>
<evidence type="ECO:0000269" key="2">
    <source>
    </source>
</evidence>
<evidence type="ECO:0000269" key="3">
    <source>
    </source>
</evidence>
<evidence type="ECO:0000305" key="4"/>
<evidence type="ECO:0007744" key="5">
    <source>
        <dbReference type="PDB" id="2UWJ"/>
    </source>
</evidence>
<evidence type="ECO:0007829" key="6">
    <source>
        <dbReference type="PDB" id="2UWJ"/>
    </source>
</evidence>
<proteinExistence type="evidence at protein level"/>
<protein>
    <recommendedName>
        <fullName evidence="4">Type 3 secretion system chaperone PscG</fullName>
    </recommendedName>
    <alternativeName>
        <fullName>Pseudomonas secretion protein G</fullName>
    </alternativeName>
    <alternativeName>
        <fullName>Type III export protein PscG</fullName>
    </alternativeName>
</protein>
<dbReference type="EMBL" id="U56077">
    <property type="protein sequence ID" value="AAC44778.1"/>
    <property type="molecule type" value="Genomic_DNA"/>
</dbReference>
<dbReference type="EMBL" id="AE004091">
    <property type="protein sequence ID" value="AAG05109.1"/>
    <property type="molecule type" value="Genomic_DNA"/>
</dbReference>
<dbReference type="PIR" id="H83430">
    <property type="entry name" value="H83430"/>
</dbReference>
<dbReference type="RefSeq" id="NP_250411.1">
    <property type="nucleotide sequence ID" value="NC_002516.2"/>
</dbReference>
<dbReference type="RefSeq" id="WP_003100735.1">
    <property type="nucleotide sequence ID" value="NZ_QZGE01000003.1"/>
</dbReference>
<dbReference type="PDB" id="2UWJ">
    <property type="method" value="X-ray"/>
    <property type="resolution" value="2.00 A"/>
    <property type="chains" value="G=1-115"/>
</dbReference>
<dbReference type="PDBsum" id="2UWJ"/>
<dbReference type="SMR" id="P95435"/>
<dbReference type="DIP" id="DIP-60935N"/>
<dbReference type="IntAct" id="P95435">
    <property type="interactions" value="1"/>
</dbReference>
<dbReference type="STRING" id="208964.PA1720"/>
<dbReference type="PaxDb" id="208964-PA1720"/>
<dbReference type="DNASU" id="881982"/>
<dbReference type="GeneID" id="881982"/>
<dbReference type="KEGG" id="pae:PA1720"/>
<dbReference type="PATRIC" id="fig|208964.12.peg.1782"/>
<dbReference type="PseudoCAP" id="PA1720"/>
<dbReference type="HOGENOM" id="CLU_2108092_0_0_6"/>
<dbReference type="InParanoid" id="P95435"/>
<dbReference type="OrthoDB" id="6918753at2"/>
<dbReference type="BioCyc" id="PAER208964:G1FZ6-1751-MONOMER"/>
<dbReference type="EvolutionaryTrace" id="P95435"/>
<dbReference type="Proteomes" id="UP000002438">
    <property type="component" value="Chromosome"/>
</dbReference>
<dbReference type="GO" id="GO:0005737">
    <property type="term" value="C:cytoplasm"/>
    <property type="evidence" value="ECO:0007669"/>
    <property type="project" value="UniProtKB-SubCell"/>
</dbReference>
<dbReference type="GO" id="GO:0030254">
    <property type="term" value="P:protein secretion by the type III secretion system"/>
    <property type="evidence" value="ECO:0000317"/>
    <property type="project" value="PseudoCAP"/>
</dbReference>
<dbReference type="Gene3D" id="1.25.40.10">
    <property type="entry name" value="Tetratricopeptide repeat domain"/>
    <property type="match status" value="1"/>
</dbReference>
<dbReference type="InterPro" id="IPR013348">
    <property type="entry name" value="T3SS_YscG_PscG"/>
</dbReference>
<dbReference type="InterPro" id="IPR011990">
    <property type="entry name" value="TPR-like_helical_dom_sf"/>
</dbReference>
<dbReference type="NCBIfam" id="TIGR02508">
    <property type="entry name" value="type_III_yscG"/>
    <property type="match status" value="1"/>
</dbReference>
<dbReference type="Pfam" id="PF09477">
    <property type="entry name" value="Type_III_YscG"/>
    <property type="match status" value="1"/>
</dbReference>
<feature type="chain" id="PRO_0000250213" description="Type 3 secretion system chaperone PscG">
    <location>
        <begin position="1"/>
        <end position="115"/>
    </location>
</feature>
<feature type="mutagenesis site" description="About 20% loss of cytotoxicity; in association with S-9." evidence="3">
    <original>L</original>
    <variation>S</variation>
    <location>
        <position position="5"/>
    </location>
</feature>
<feature type="mutagenesis site" description="About 20% loss of cytotoxicity; in association with S-5." evidence="3">
    <original>L</original>
    <variation>S</variation>
    <location>
        <position position="9"/>
    </location>
</feature>
<feature type="helix" evidence="6">
    <location>
        <begin position="4"/>
        <end position="17"/>
    </location>
</feature>
<feature type="turn" evidence="6">
    <location>
        <begin position="18"/>
        <end position="20"/>
    </location>
</feature>
<feature type="helix" evidence="6">
    <location>
        <begin position="22"/>
        <end position="34"/>
    </location>
</feature>
<feature type="helix" evidence="6">
    <location>
        <begin position="38"/>
        <end position="51"/>
    </location>
</feature>
<feature type="helix" evidence="6">
    <location>
        <begin position="55"/>
        <end position="59"/>
    </location>
</feature>
<feature type="helix" evidence="6">
    <location>
        <begin position="60"/>
        <end position="62"/>
    </location>
</feature>
<feature type="helix" evidence="6">
    <location>
        <begin position="68"/>
        <end position="70"/>
    </location>
</feature>
<feature type="helix" evidence="6">
    <location>
        <begin position="71"/>
        <end position="80"/>
    </location>
</feature>
<feature type="helix" evidence="6">
    <location>
        <begin position="84"/>
        <end position="95"/>
    </location>
</feature>
<feature type="helix" evidence="6">
    <location>
        <begin position="100"/>
        <end position="113"/>
    </location>
</feature>
<name>PSCG_PSEAE</name>
<comment type="function">
    <text evidence="1 3">Chaperone of the type III secretion system (T3SS), also called injectisome, which is used to inject bacterial effector proteins into eukaryotic host cells, facilitating the establishment and dissemination of infection. Along with PscE, prevents premature polymerization of the PscF/SctF needle protein within the cytoplasm (PubMed:20494986). Required for type III secretion needle assembly. Also required for cytotoxicity by influencing PscF/SctF levels.</text>
</comment>
<comment type="subunit">
    <text evidence="1 2 3">Forms a stable heterotrimeric complex with PscE and PscF/SctF in the cytoplasm (PubMed:17470796). Co-stabilized by PscE.</text>
</comment>
<comment type="interaction">
    <interactant intactId="EBI-6411621">
        <id>P95435</id>
    </interactant>
    <interactant intactId="EBI-6411628">
        <id>Q9I317</id>
        <label>pscE</label>
    </interactant>
    <organismsDiffer>false</organismsDiffer>
    <experiments>3</experiments>
</comment>
<comment type="subcellular location">
    <subcellularLocation>
        <location evidence="1">Cytoplasm</location>
    </subcellularLocation>
</comment>
<comment type="mass spectrometry"/>
<comment type="disruption phenotype">
    <text evidence="3">Deletion mutant looses the capacity to lyse macrophages, indicating the absence of a functional T3SS.</text>
</comment>
<comment type="similarity">
    <text evidence="4">Belongs to the YscG family.</text>
</comment>
<reference key="1">
    <citation type="journal article" date="1996" name="Mol. Microbiol.">
        <title>Exoenzyme S of Pseudomonas aeruginosa is secreted by a type III pathway.</title>
        <authorList>
            <person name="Yahr T.L."/>
            <person name="Goranson J."/>
            <person name="Frank D.W."/>
        </authorList>
    </citation>
    <scope>NUCLEOTIDE SEQUENCE [GENOMIC DNA]</scope>
    <source>
        <strain>388</strain>
    </source>
</reference>
<reference key="2">
    <citation type="journal article" date="2000" name="Nature">
        <title>Complete genome sequence of Pseudomonas aeruginosa PAO1, an opportunistic pathogen.</title>
        <authorList>
            <person name="Stover C.K."/>
            <person name="Pham X.-Q.T."/>
            <person name="Erwin A.L."/>
            <person name="Mizoguchi S.D."/>
            <person name="Warrener P."/>
            <person name="Hickey M.J."/>
            <person name="Brinkman F.S.L."/>
            <person name="Hufnagle W.O."/>
            <person name="Kowalik D.J."/>
            <person name="Lagrou M."/>
            <person name="Garber R.L."/>
            <person name="Goltry L."/>
            <person name="Tolentino E."/>
            <person name="Westbrock-Wadman S."/>
            <person name="Yuan Y."/>
            <person name="Brody L.L."/>
            <person name="Coulter S.N."/>
            <person name="Folger K.R."/>
            <person name="Kas A."/>
            <person name="Larbig K."/>
            <person name="Lim R.M."/>
            <person name="Smith K.A."/>
            <person name="Spencer D.H."/>
            <person name="Wong G.K.-S."/>
            <person name="Wu Z."/>
            <person name="Paulsen I.T."/>
            <person name="Reizer J."/>
            <person name="Saier M.H. Jr."/>
            <person name="Hancock R.E.W."/>
            <person name="Lory S."/>
            <person name="Olson M.V."/>
        </authorList>
    </citation>
    <scope>NUCLEOTIDE SEQUENCE [LARGE SCALE GENOMIC DNA]</scope>
    <source>
        <strain>ATCC 15692 / DSM 22644 / CIP 104116 / JCM 14847 / LMG 12228 / 1C / PRS 101 / PAO1</strain>
    </source>
</reference>
<reference key="3">
    <citation type="journal article" date="2005" name="J. Biol. Chem.">
        <title>The PscE-PscF-PscG complex controls type III secretion needle biogenesis in Pseudomonas aeruginosa.</title>
        <authorList>
            <person name="Quinaud M."/>
            <person name="Chabert J."/>
            <person name="Faudry E."/>
            <person name="Neumann E."/>
            <person name="Lemaire D."/>
            <person name="Pastor A."/>
            <person name="Elsen S."/>
            <person name="Dessen A."/>
            <person name="Attree I."/>
        </authorList>
    </citation>
    <scope>FUNCTION</scope>
    <scope>SUBUNIT</scope>
    <scope>MASS SPECTROMETRY</scope>
    <scope>SUBCELLULAR LOCATION</scope>
    <source>
        <strain>CHA</strain>
    </source>
</reference>
<reference key="4">
    <citation type="journal article" date="2010" name="J. Bacteriol.">
        <title>Cochaperone interactions in export of the type III needle component PscF of Pseudomonas aeruginosa.</title>
        <authorList>
            <person name="Ple S."/>
            <person name="Job V."/>
            <person name="Dessen A."/>
            <person name="Attree I."/>
        </authorList>
    </citation>
    <scope>FUNCTION</scope>
    <scope>INTERACTION WITH PSCG</scope>
    <scope>MUTAGENESIS OF LEU-5 AND LEU-9</scope>
    <scope>DISRUPTION PHENOTYPE</scope>
</reference>
<reference evidence="5" key="5">
    <citation type="journal article" date="2007" name="Proc. Natl. Acad. Sci. U.S.A.">
        <title>Structure of the heterotrimeric complex that regulates type III secretion needle formation.</title>
        <authorList>
            <person name="Quinaud M."/>
            <person name="Ple S."/>
            <person name="Job V."/>
            <person name="Contreras-Martel C."/>
            <person name="Simorre J.P."/>
            <person name="Attree I."/>
            <person name="Dessen A."/>
        </authorList>
    </citation>
    <scope>X-RAY CRYSTALLOGRAPHY (2.00 ANGSTROMS)</scope>
    <scope>INTERACTION WITH PSCE AND PSCF/SCTF</scope>
</reference>
<organism>
    <name type="scientific">Pseudomonas aeruginosa (strain ATCC 15692 / DSM 22644 / CIP 104116 / JCM 14847 / LMG 12228 / 1C / PRS 101 / PAO1)</name>
    <dbReference type="NCBI Taxonomy" id="208964"/>
    <lineage>
        <taxon>Bacteria</taxon>
        <taxon>Pseudomonadati</taxon>
        <taxon>Pseudomonadota</taxon>
        <taxon>Gammaproteobacteria</taxon>
        <taxon>Pseudomonadales</taxon>
        <taxon>Pseudomonadaceae</taxon>
        <taxon>Pseudomonas</taxon>
    </lineage>
</organism>
<keyword id="KW-0002">3D-structure</keyword>
<keyword id="KW-0963">Cytoplasm</keyword>
<keyword id="KW-1185">Reference proteome</keyword>
<keyword id="KW-0843">Virulence</keyword>